<organism>
    <name type="scientific">Ralstonia nicotianae (strain ATCC BAA-1114 / GMI1000)</name>
    <name type="common">Ralstonia solanacearum</name>
    <dbReference type="NCBI Taxonomy" id="267608"/>
    <lineage>
        <taxon>Bacteria</taxon>
        <taxon>Pseudomonadati</taxon>
        <taxon>Pseudomonadota</taxon>
        <taxon>Betaproteobacteria</taxon>
        <taxon>Burkholderiales</taxon>
        <taxon>Burkholderiaceae</taxon>
        <taxon>Ralstonia</taxon>
        <taxon>Ralstonia solanacearum species complex</taxon>
    </lineage>
</organism>
<accession>Q8Y0H3</accession>
<evidence type="ECO:0000255" key="1">
    <source>
        <dbReference type="HAMAP-Rule" id="MF_00203"/>
    </source>
</evidence>
<feature type="chain" id="PRO_0000227467" description="UvrABC system protein C">
    <location>
        <begin position="1"/>
        <end position="654"/>
    </location>
</feature>
<feature type="domain" description="GIY-YIG" evidence="1">
    <location>
        <begin position="32"/>
        <end position="110"/>
    </location>
</feature>
<feature type="domain" description="UVR" evidence="1">
    <location>
        <begin position="219"/>
        <end position="254"/>
    </location>
</feature>
<proteinExistence type="inferred from homology"/>
<sequence>MPPPGAQTPPAPAVDPSEAAFDAKAHIARLPSLPGVYRYFDAQGSVLYVGKARDLKKRVSSYFTKTLLSPRIAMMVAKIAHIETTVVRSEAEALLLENNLIKALAPRYNILFRDDKSYPYLKLTQHAYPRMAYYRGATDRKHQYFGPFPSAHAVRESMQILQKVFQLRTCEDTVFNNRTRPCLLHQIHRCTAPCVQAISAEDYARDVANAAGFLLGRQDEVMQTLQDKMQRHAAALEFEQAATVRDQIGALSTVLTRQSVEEVGQASDIDILAVAIKGGHACVNLAMVRGGRHLGDKAYFPTHVEEGAAIVGVDVEADVPEGAETQPEPARDPERMARDILEAFVAQHYLDQFVPPVLVVSHPIRAAGLIEALAAQAGRRVSVVRQPQGARRAWLEMAEKGAELSLARRLSEQGSQQARTRALAETIGVDLEDLAALRVECFDISHTAGEATQASCVVFHSHAMQNGEYRRYNIQDIIPGDDYAAMRQVLTRRYQKVVEQAAEDAPDMPRVVLIDGGKGQVEVARQVFEELGLDIGLLVGVAKGEGRKVGLETLVFADGRPSLELGQGSAALMLVAQIRDEAHRFAITGMRAKRAKARNTSRLEEIEGIGAKRRQRLLARFGGLRGVMAASVEELATVEGISQTLAEEIYRQLH</sequence>
<keyword id="KW-0963">Cytoplasm</keyword>
<keyword id="KW-0227">DNA damage</keyword>
<keyword id="KW-0228">DNA excision</keyword>
<keyword id="KW-0234">DNA repair</keyword>
<keyword id="KW-0267">Excision nuclease</keyword>
<keyword id="KW-1185">Reference proteome</keyword>
<keyword id="KW-0742">SOS response</keyword>
<dbReference type="EMBL" id="AL646052">
    <property type="protein sequence ID" value="CAD14773.1"/>
    <property type="molecule type" value="Genomic_DNA"/>
</dbReference>
<dbReference type="SMR" id="Q8Y0H3"/>
<dbReference type="STRING" id="267608.RSc1071"/>
<dbReference type="EnsemblBacteria" id="CAD14773">
    <property type="protein sequence ID" value="CAD14773"/>
    <property type="gene ID" value="RSc1071"/>
</dbReference>
<dbReference type="KEGG" id="rso:RSc1071"/>
<dbReference type="eggNOG" id="COG0322">
    <property type="taxonomic scope" value="Bacteria"/>
</dbReference>
<dbReference type="HOGENOM" id="CLU_014841_3_0_4"/>
<dbReference type="Proteomes" id="UP000001436">
    <property type="component" value="Chromosome"/>
</dbReference>
<dbReference type="GO" id="GO:0005737">
    <property type="term" value="C:cytoplasm"/>
    <property type="evidence" value="ECO:0007669"/>
    <property type="project" value="UniProtKB-SubCell"/>
</dbReference>
<dbReference type="GO" id="GO:0009380">
    <property type="term" value="C:excinuclease repair complex"/>
    <property type="evidence" value="ECO:0007669"/>
    <property type="project" value="InterPro"/>
</dbReference>
<dbReference type="GO" id="GO:0003677">
    <property type="term" value="F:DNA binding"/>
    <property type="evidence" value="ECO:0007669"/>
    <property type="project" value="UniProtKB-UniRule"/>
</dbReference>
<dbReference type="GO" id="GO:0009381">
    <property type="term" value="F:excinuclease ABC activity"/>
    <property type="evidence" value="ECO:0007669"/>
    <property type="project" value="UniProtKB-UniRule"/>
</dbReference>
<dbReference type="GO" id="GO:0006289">
    <property type="term" value="P:nucleotide-excision repair"/>
    <property type="evidence" value="ECO:0007669"/>
    <property type="project" value="UniProtKB-UniRule"/>
</dbReference>
<dbReference type="GO" id="GO:0009432">
    <property type="term" value="P:SOS response"/>
    <property type="evidence" value="ECO:0007669"/>
    <property type="project" value="UniProtKB-UniRule"/>
</dbReference>
<dbReference type="CDD" id="cd10434">
    <property type="entry name" value="GIY-YIG_UvrC_Cho"/>
    <property type="match status" value="1"/>
</dbReference>
<dbReference type="FunFam" id="1.10.150.20:FF:000005">
    <property type="entry name" value="UvrABC system protein C"/>
    <property type="match status" value="1"/>
</dbReference>
<dbReference type="FunFam" id="3.30.420.340:FF:000001">
    <property type="entry name" value="UvrABC system protein C"/>
    <property type="match status" value="1"/>
</dbReference>
<dbReference type="FunFam" id="3.40.1440.10:FF:000001">
    <property type="entry name" value="UvrABC system protein C"/>
    <property type="match status" value="1"/>
</dbReference>
<dbReference type="Gene3D" id="1.10.150.20">
    <property type="entry name" value="5' to 3' exonuclease, C-terminal subdomain"/>
    <property type="match status" value="1"/>
</dbReference>
<dbReference type="Gene3D" id="3.40.1440.10">
    <property type="entry name" value="GIY-YIG endonuclease"/>
    <property type="match status" value="1"/>
</dbReference>
<dbReference type="Gene3D" id="4.10.860.10">
    <property type="entry name" value="UVR domain"/>
    <property type="match status" value="1"/>
</dbReference>
<dbReference type="Gene3D" id="3.30.420.340">
    <property type="entry name" value="UvrC, RNAse H endonuclease domain"/>
    <property type="match status" value="1"/>
</dbReference>
<dbReference type="HAMAP" id="MF_00203">
    <property type="entry name" value="UvrC"/>
    <property type="match status" value="1"/>
</dbReference>
<dbReference type="InterPro" id="IPR000305">
    <property type="entry name" value="GIY-YIG_endonuc"/>
</dbReference>
<dbReference type="InterPro" id="IPR035901">
    <property type="entry name" value="GIY-YIG_endonuc_sf"/>
</dbReference>
<dbReference type="InterPro" id="IPR047296">
    <property type="entry name" value="GIY-YIG_UvrC_Cho"/>
</dbReference>
<dbReference type="InterPro" id="IPR003583">
    <property type="entry name" value="Hlx-hairpin-Hlx_DNA-bd_motif"/>
</dbReference>
<dbReference type="InterPro" id="IPR010994">
    <property type="entry name" value="RuvA_2-like"/>
</dbReference>
<dbReference type="InterPro" id="IPR001943">
    <property type="entry name" value="UVR_dom"/>
</dbReference>
<dbReference type="InterPro" id="IPR036876">
    <property type="entry name" value="UVR_dom_sf"/>
</dbReference>
<dbReference type="InterPro" id="IPR050066">
    <property type="entry name" value="UvrABC_protein_C"/>
</dbReference>
<dbReference type="InterPro" id="IPR004791">
    <property type="entry name" value="UvrC"/>
</dbReference>
<dbReference type="InterPro" id="IPR001162">
    <property type="entry name" value="UvrC_RNase_H_dom"/>
</dbReference>
<dbReference type="InterPro" id="IPR038476">
    <property type="entry name" value="UvrC_RNase_H_dom_sf"/>
</dbReference>
<dbReference type="NCBIfam" id="NF001824">
    <property type="entry name" value="PRK00558.1-5"/>
    <property type="match status" value="1"/>
</dbReference>
<dbReference type="NCBIfam" id="TIGR00194">
    <property type="entry name" value="uvrC"/>
    <property type="match status" value="1"/>
</dbReference>
<dbReference type="PANTHER" id="PTHR30562:SF1">
    <property type="entry name" value="UVRABC SYSTEM PROTEIN C"/>
    <property type="match status" value="1"/>
</dbReference>
<dbReference type="PANTHER" id="PTHR30562">
    <property type="entry name" value="UVRC/OXIDOREDUCTASE"/>
    <property type="match status" value="1"/>
</dbReference>
<dbReference type="Pfam" id="PF01541">
    <property type="entry name" value="GIY-YIG"/>
    <property type="match status" value="1"/>
</dbReference>
<dbReference type="Pfam" id="PF14520">
    <property type="entry name" value="HHH_5"/>
    <property type="match status" value="1"/>
</dbReference>
<dbReference type="Pfam" id="PF02151">
    <property type="entry name" value="UVR"/>
    <property type="match status" value="1"/>
</dbReference>
<dbReference type="Pfam" id="PF22920">
    <property type="entry name" value="UvrC_RNaseH"/>
    <property type="match status" value="1"/>
</dbReference>
<dbReference type="Pfam" id="PF08459">
    <property type="entry name" value="UvrC_RNaseH_dom"/>
    <property type="match status" value="1"/>
</dbReference>
<dbReference type="SMART" id="SM00465">
    <property type="entry name" value="GIYc"/>
    <property type="match status" value="1"/>
</dbReference>
<dbReference type="SMART" id="SM00278">
    <property type="entry name" value="HhH1"/>
    <property type="match status" value="2"/>
</dbReference>
<dbReference type="SUPFAM" id="SSF46600">
    <property type="entry name" value="C-terminal UvrC-binding domain of UvrB"/>
    <property type="match status" value="1"/>
</dbReference>
<dbReference type="SUPFAM" id="SSF82771">
    <property type="entry name" value="GIY-YIG endonuclease"/>
    <property type="match status" value="1"/>
</dbReference>
<dbReference type="SUPFAM" id="SSF47781">
    <property type="entry name" value="RuvA domain 2-like"/>
    <property type="match status" value="1"/>
</dbReference>
<dbReference type="PROSITE" id="PS50164">
    <property type="entry name" value="GIY_YIG"/>
    <property type="match status" value="1"/>
</dbReference>
<dbReference type="PROSITE" id="PS50151">
    <property type="entry name" value="UVR"/>
    <property type="match status" value="1"/>
</dbReference>
<dbReference type="PROSITE" id="PS50165">
    <property type="entry name" value="UVRC"/>
    <property type="match status" value="1"/>
</dbReference>
<reference key="1">
    <citation type="journal article" date="2002" name="Nature">
        <title>Genome sequence of the plant pathogen Ralstonia solanacearum.</title>
        <authorList>
            <person name="Salanoubat M."/>
            <person name="Genin S."/>
            <person name="Artiguenave F."/>
            <person name="Gouzy J."/>
            <person name="Mangenot S."/>
            <person name="Arlat M."/>
            <person name="Billault A."/>
            <person name="Brottier P."/>
            <person name="Camus J.-C."/>
            <person name="Cattolico L."/>
            <person name="Chandler M."/>
            <person name="Choisne N."/>
            <person name="Claudel-Renard C."/>
            <person name="Cunnac S."/>
            <person name="Demange N."/>
            <person name="Gaspin C."/>
            <person name="Lavie M."/>
            <person name="Moisan A."/>
            <person name="Robert C."/>
            <person name="Saurin W."/>
            <person name="Schiex T."/>
            <person name="Siguier P."/>
            <person name="Thebault P."/>
            <person name="Whalen M."/>
            <person name="Wincker P."/>
            <person name="Levy M."/>
            <person name="Weissenbach J."/>
            <person name="Boucher C.A."/>
        </authorList>
    </citation>
    <scope>NUCLEOTIDE SEQUENCE [LARGE SCALE GENOMIC DNA]</scope>
    <source>
        <strain>ATCC BAA-1114 / GMI1000</strain>
    </source>
</reference>
<name>UVRC_RALN1</name>
<protein>
    <recommendedName>
        <fullName evidence="1">UvrABC system protein C</fullName>
        <shortName evidence="1">Protein UvrC</shortName>
    </recommendedName>
    <alternativeName>
        <fullName evidence="1">Excinuclease ABC subunit C</fullName>
    </alternativeName>
</protein>
<comment type="function">
    <text evidence="1">The UvrABC repair system catalyzes the recognition and processing of DNA lesions. UvrC both incises the 5' and 3' sides of the lesion. The N-terminal half is responsible for the 3' incision and the C-terminal half is responsible for the 5' incision.</text>
</comment>
<comment type="subunit">
    <text evidence="1">Interacts with UvrB in an incision complex.</text>
</comment>
<comment type="subcellular location">
    <subcellularLocation>
        <location evidence="1">Cytoplasm</location>
    </subcellularLocation>
</comment>
<comment type="similarity">
    <text evidence="1">Belongs to the UvrC family.</text>
</comment>
<gene>
    <name evidence="1" type="primary">uvrC</name>
    <name type="ordered locus">RSc1071</name>
    <name type="ORF">RS04116</name>
</gene>